<proteinExistence type="evidence at protein level"/>
<accession>P0DSH4</accession>
<accession>A0A7H2C7A3</accession>
<reference key="1">
    <citation type="journal article" date="1997" name="Science">
        <title>The complete genome sequence of Escherichia coli K-12.</title>
        <authorList>
            <person name="Blattner F.R."/>
            <person name="Plunkett G. III"/>
            <person name="Bloch C.A."/>
            <person name="Perna N.T."/>
            <person name="Burland V."/>
            <person name="Riley M."/>
            <person name="Collado-Vides J."/>
            <person name="Glasner J.D."/>
            <person name="Rode C.K."/>
            <person name="Mayhew G.F."/>
            <person name="Gregor J."/>
            <person name="Davis N.W."/>
            <person name="Kirkpatrick H.A."/>
            <person name="Goeden M.A."/>
            <person name="Rose D.J."/>
            <person name="Mau B."/>
            <person name="Shao Y."/>
        </authorList>
    </citation>
    <scope>NUCLEOTIDE SEQUENCE [LARGE SCALE GENOMIC DNA]</scope>
    <source>
        <strain>K12 / MG1655 / ATCC 47076</strain>
    </source>
</reference>
<reference key="2">
    <citation type="journal article" date="2019" name="MBio">
        <title>Identifying small proteins by ribosome profiling with stalled initiation complexes.</title>
        <authorList>
            <person name="Weaver J."/>
            <person name="Mohammad F."/>
            <person name="Buskirk A.R."/>
            <person name="Storz G."/>
        </authorList>
    </citation>
    <scope>IDENTIFICATION</scope>
    <scope>INDUCTION</scope>
    <source>
        <strain>K12 / MG1655 / ATCC 47076</strain>
    </source>
</reference>
<evidence type="ECO:0000269" key="1">
    <source>
    </source>
</evidence>
<evidence type="ECO:0000303" key="2">
    <source>
    </source>
</evidence>
<evidence type="ECO:0000312" key="3">
    <source>
        <dbReference type="EMBL" id="QNV50550.1"/>
    </source>
</evidence>
<dbReference type="EMBL" id="U00096">
    <property type="protein sequence ID" value="QNV50550.1"/>
    <property type="molecule type" value="Genomic_DNA"/>
</dbReference>
<dbReference type="InParanoid" id="P0DSH4"/>
<dbReference type="BioCyc" id="EcoCyc:MONOMER0-4510"/>
<dbReference type="Proteomes" id="UP000000625">
    <property type="component" value="Chromosome"/>
</dbReference>
<dbReference type="Pfam" id="PF23515">
    <property type="entry name" value="YibY"/>
    <property type="match status" value="1"/>
</dbReference>
<protein>
    <recommendedName>
        <fullName evidence="2">Protein YibY</fullName>
    </recommendedName>
</protein>
<comment type="induction">
    <text evidence="1">Expressed at low levels in exponential phase in rich medium (at protein level).</text>
</comment>
<comment type="miscellaneous">
    <text evidence="1">Encoded antisense to waaL; it is entirely within the waaL coding region.</text>
</comment>
<keyword id="KW-1185">Reference proteome</keyword>
<sequence length="36" mass="4027">MIIGMLRAHMITSLSPIPTMPSVNINKPKARFLYAI</sequence>
<feature type="chain" id="PRO_0000447152" description="Protein YibY">
    <location>
        <begin position="1"/>
        <end position="36"/>
    </location>
</feature>
<gene>
    <name evidence="2" type="primary">yibY</name>
    <name evidence="3" type="ordered locus">b4796</name>
</gene>
<organism>
    <name type="scientific">Escherichia coli (strain K12)</name>
    <dbReference type="NCBI Taxonomy" id="83333"/>
    <lineage>
        <taxon>Bacteria</taxon>
        <taxon>Pseudomonadati</taxon>
        <taxon>Pseudomonadota</taxon>
        <taxon>Gammaproteobacteria</taxon>
        <taxon>Enterobacterales</taxon>
        <taxon>Enterobacteriaceae</taxon>
        <taxon>Escherichia</taxon>
    </lineage>
</organism>
<name>YIBY_ECOLI</name>